<proteinExistence type="inferred from homology"/>
<name>RL25_HELPY</name>
<gene>
    <name evidence="1" type="primary">rplY</name>
    <name evidence="1" type="synonym">ctc</name>
    <name type="ordered locus">HP_1496</name>
</gene>
<sequence>MLEGVIRESITKANAKALKKDGYLIANVYGKGIENVNGAFKLNPFIKYLKEKKHLIFPVKLGDKTFEVVVQEYQKNPVTNELIHVDLLAVTKGVKSKFKVPIKHQGTPVGLKNKGILMLSKKRISVECAPEHLPDHYLVDVAPLDVNESILVRDLEKHENVKILDHDSIAVIGVIKAK</sequence>
<keyword id="KW-1185">Reference proteome</keyword>
<keyword id="KW-0687">Ribonucleoprotein</keyword>
<keyword id="KW-0689">Ribosomal protein</keyword>
<keyword id="KW-0694">RNA-binding</keyword>
<keyword id="KW-0699">rRNA-binding</keyword>
<dbReference type="EMBL" id="AE000511">
    <property type="protein sequence ID" value="AAD08537.1"/>
    <property type="molecule type" value="Genomic_DNA"/>
</dbReference>
<dbReference type="PIR" id="H64706">
    <property type="entry name" value="H64706"/>
</dbReference>
<dbReference type="RefSeq" id="NP_208287.1">
    <property type="nucleotide sequence ID" value="NC_000915.1"/>
</dbReference>
<dbReference type="RefSeq" id="WP_000889331.1">
    <property type="nucleotide sequence ID" value="NC_018939.1"/>
</dbReference>
<dbReference type="SMR" id="P56078"/>
<dbReference type="DIP" id="DIP-3750N"/>
<dbReference type="IntAct" id="P56078">
    <property type="interactions" value="4"/>
</dbReference>
<dbReference type="MINT" id="P56078"/>
<dbReference type="STRING" id="85962.HP_1496"/>
<dbReference type="PaxDb" id="85962-C694_07750"/>
<dbReference type="EnsemblBacteria" id="AAD08537">
    <property type="protein sequence ID" value="AAD08537"/>
    <property type="gene ID" value="HP_1496"/>
</dbReference>
<dbReference type="KEGG" id="heo:C694_07750"/>
<dbReference type="KEGG" id="hpy:HP_1496"/>
<dbReference type="PATRIC" id="fig|85962.47.peg.1608"/>
<dbReference type="eggNOG" id="COG1825">
    <property type="taxonomic scope" value="Bacteria"/>
</dbReference>
<dbReference type="InParanoid" id="P56078"/>
<dbReference type="OrthoDB" id="5339138at2"/>
<dbReference type="PhylomeDB" id="P56078"/>
<dbReference type="Proteomes" id="UP000000429">
    <property type="component" value="Chromosome"/>
</dbReference>
<dbReference type="GO" id="GO:0022625">
    <property type="term" value="C:cytosolic large ribosomal subunit"/>
    <property type="evidence" value="ECO:0000318"/>
    <property type="project" value="GO_Central"/>
</dbReference>
<dbReference type="GO" id="GO:0008097">
    <property type="term" value="F:5S rRNA binding"/>
    <property type="evidence" value="ECO:0000318"/>
    <property type="project" value="GO_Central"/>
</dbReference>
<dbReference type="GO" id="GO:0003735">
    <property type="term" value="F:structural constituent of ribosome"/>
    <property type="evidence" value="ECO:0007669"/>
    <property type="project" value="InterPro"/>
</dbReference>
<dbReference type="GO" id="GO:0006412">
    <property type="term" value="P:translation"/>
    <property type="evidence" value="ECO:0000318"/>
    <property type="project" value="GO_Central"/>
</dbReference>
<dbReference type="CDD" id="cd00495">
    <property type="entry name" value="Ribosomal_L25_TL5_CTC"/>
    <property type="match status" value="1"/>
</dbReference>
<dbReference type="Gene3D" id="2.170.120.20">
    <property type="entry name" value="Ribosomal protein L25, beta domain"/>
    <property type="match status" value="1"/>
</dbReference>
<dbReference type="Gene3D" id="2.40.240.10">
    <property type="entry name" value="Ribosomal Protein L25, Chain P"/>
    <property type="match status" value="1"/>
</dbReference>
<dbReference type="HAMAP" id="MF_01334">
    <property type="entry name" value="Ribosomal_bL25_CTC"/>
    <property type="match status" value="1"/>
</dbReference>
<dbReference type="InterPro" id="IPR020056">
    <property type="entry name" value="Rbsml_bL25/Gln-tRNA_synth_N"/>
</dbReference>
<dbReference type="InterPro" id="IPR011035">
    <property type="entry name" value="Ribosomal_bL25/Gln-tRNA_synth"/>
</dbReference>
<dbReference type="InterPro" id="IPR020057">
    <property type="entry name" value="Ribosomal_bL25_b-dom"/>
</dbReference>
<dbReference type="InterPro" id="IPR037121">
    <property type="entry name" value="Ribosomal_bL25_C"/>
</dbReference>
<dbReference type="InterPro" id="IPR001021">
    <property type="entry name" value="Ribosomal_bL25_long"/>
</dbReference>
<dbReference type="InterPro" id="IPR029751">
    <property type="entry name" value="Ribosomal_L25_dom"/>
</dbReference>
<dbReference type="InterPro" id="IPR020930">
    <property type="entry name" value="Ribosomal_uL5_bac-type"/>
</dbReference>
<dbReference type="NCBIfam" id="TIGR00731">
    <property type="entry name" value="bL25_bact_ctc"/>
    <property type="match status" value="1"/>
</dbReference>
<dbReference type="NCBIfam" id="NF004129">
    <property type="entry name" value="PRK05618.1-4"/>
    <property type="match status" value="1"/>
</dbReference>
<dbReference type="PANTHER" id="PTHR33284">
    <property type="entry name" value="RIBOSOMAL PROTEIN L25/GLN-TRNA SYNTHETASE, ANTI-CODON-BINDING DOMAIN-CONTAINING PROTEIN"/>
    <property type="match status" value="1"/>
</dbReference>
<dbReference type="PANTHER" id="PTHR33284:SF1">
    <property type="entry name" value="RIBOSOMAL PROTEIN L25_GLN-TRNA SYNTHETASE, ANTI-CODON-BINDING DOMAIN-CONTAINING PROTEIN"/>
    <property type="match status" value="1"/>
</dbReference>
<dbReference type="Pfam" id="PF01386">
    <property type="entry name" value="Ribosomal_L25p"/>
    <property type="match status" value="1"/>
</dbReference>
<dbReference type="Pfam" id="PF14693">
    <property type="entry name" value="Ribosomal_TL5_C"/>
    <property type="match status" value="1"/>
</dbReference>
<dbReference type="SUPFAM" id="SSF50715">
    <property type="entry name" value="Ribosomal protein L25-like"/>
    <property type="match status" value="1"/>
</dbReference>
<feature type="chain" id="PRO_0000181554" description="Large ribosomal subunit protein bL25">
    <location>
        <begin position="1"/>
        <end position="178"/>
    </location>
</feature>
<evidence type="ECO:0000255" key="1">
    <source>
        <dbReference type="HAMAP-Rule" id="MF_01334"/>
    </source>
</evidence>
<evidence type="ECO:0000305" key="2"/>
<reference key="1">
    <citation type="journal article" date="1997" name="Nature">
        <title>The complete genome sequence of the gastric pathogen Helicobacter pylori.</title>
        <authorList>
            <person name="Tomb J.-F."/>
            <person name="White O."/>
            <person name="Kerlavage A.R."/>
            <person name="Clayton R.A."/>
            <person name="Sutton G.G."/>
            <person name="Fleischmann R.D."/>
            <person name="Ketchum K.A."/>
            <person name="Klenk H.-P."/>
            <person name="Gill S.R."/>
            <person name="Dougherty B.A."/>
            <person name="Nelson K.E."/>
            <person name="Quackenbush J."/>
            <person name="Zhou L."/>
            <person name="Kirkness E.F."/>
            <person name="Peterson S.N."/>
            <person name="Loftus B.J."/>
            <person name="Richardson D.L."/>
            <person name="Dodson R.J."/>
            <person name="Khalak H.G."/>
            <person name="Glodek A."/>
            <person name="McKenney K."/>
            <person name="FitzGerald L.M."/>
            <person name="Lee N."/>
            <person name="Adams M.D."/>
            <person name="Hickey E.K."/>
            <person name="Berg D.E."/>
            <person name="Gocayne J.D."/>
            <person name="Utterback T.R."/>
            <person name="Peterson J.D."/>
            <person name="Kelley J.M."/>
            <person name="Cotton M.D."/>
            <person name="Weidman J.F."/>
            <person name="Fujii C."/>
            <person name="Bowman C."/>
            <person name="Watthey L."/>
            <person name="Wallin E."/>
            <person name="Hayes W.S."/>
            <person name="Borodovsky M."/>
            <person name="Karp P.D."/>
            <person name="Smith H.O."/>
            <person name="Fraser C.M."/>
            <person name="Venter J.C."/>
        </authorList>
    </citation>
    <scope>NUCLEOTIDE SEQUENCE [LARGE SCALE GENOMIC DNA]</scope>
    <source>
        <strain>ATCC 700392 / 26695</strain>
    </source>
</reference>
<protein>
    <recommendedName>
        <fullName evidence="1">Large ribosomal subunit protein bL25</fullName>
    </recommendedName>
    <alternativeName>
        <fullName evidence="2">50S ribosomal protein L25</fullName>
    </alternativeName>
    <alternativeName>
        <fullName evidence="1">General stress protein CTC</fullName>
    </alternativeName>
</protein>
<comment type="function">
    <text evidence="1">This is one of the proteins that binds to the 5S RNA in the ribosome where it forms part of the central protuberance.</text>
</comment>
<comment type="subunit">
    <text evidence="1">Part of the 50S ribosomal subunit; part of the 5S rRNA/L5/L18/L25 subcomplex. Contacts the 5S rRNA. Binds to the 5S rRNA independently of L5 and L18.</text>
</comment>
<comment type="similarity">
    <text evidence="1">Belongs to the bacterial ribosomal protein bL25 family. CTC subfamily.</text>
</comment>
<organism>
    <name type="scientific">Helicobacter pylori (strain ATCC 700392 / 26695)</name>
    <name type="common">Campylobacter pylori</name>
    <dbReference type="NCBI Taxonomy" id="85962"/>
    <lineage>
        <taxon>Bacteria</taxon>
        <taxon>Pseudomonadati</taxon>
        <taxon>Campylobacterota</taxon>
        <taxon>Epsilonproteobacteria</taxon>
        <taxon>Campylobacterales</taxon>
        <taxon>Helicobacteraceae</taxon>
        <taxon>Helicobacter</taxon>
    </lineage>
</organism>
<accession>P56078</accession>